<feature type="chain" id="PRO_1000135083" description="1-(5-phosphoribosyl)-5-[(5-phosphoribosylamino)methylideneamino] imidazole-4-carboxamide isomerase">
    <location>
        <begin position="1"/>
        <end position="242"/>
    </location>
</feature>
<feature type="active site" description="Proton acceptor" evidence="1">
    <location>
        <position position="8"/>
    </location>
</feature>
<feature type="active site" description="Proton donor" evidence="1">
    <location>
        <position position="129"/>
    </location>
</feature>
<organism>
    <name type="scientific">Beijerinckia indica subsp. indica (strain ATCC 9039 / DSM 1715 / NCIMB 8712)</name>
    <dbReference type="NCBI Taxonomy" id="395963"/>
    <lineage>
        <taxon>Bacteria</taxon>
        <taxon>Pseudomonadati</taxon>
        <taxon>Pseudomonadota</taxon>
        <taxon>Alphaproteobacteria</taxon>
        <taxon>Hyphomicrobiales</taxon>
        <taxon>Beijerinckiaceae</taxon>
        <taxon>Beijerinckia</taxon>
    </lineage>
</organism>
<accession>B2ICL3</accession>
<comment type="catalytic activity">
    <reaction evidence="1">
        <text>1-(5-phospho-beta-D-ribosyl)-5-[(5-phospho-beta-D-ribosylamino)methylideneamino]imidazole-4-carboxamide = 5-[(5-phospho-1-deoxy-D-ribulos-1-ylimino)methylamino]-1-(5-phospho-beta-D-ribosyl)imidazole-4-carboxamide</text>
        <dbReference type="Rhea" id="RHEA:15469"/>
        <dbReference type="ChEBI" id="CHEBI:58435"/>
        <dbReference type="ChEBI" id="CHEBI:58525"/>
        <dbReference type="EC" id="5.3.1.16"/>
    </reaction>
</comment>
<comment type="pathway">
    <text evidence="1">Amino-acid biosynthesis; L-histidine biosynthesis; L-histidine from 5-phospho-alpha-D-ribose 1-diphosphate: step 4/9.</text>
</comment>
<comment type="subcellular location">
    <subcellularLocation>
        <location evidence="1">Cytoplasm</location>
    </subcellularLocation>
</comment>
<comment type="similarity">
    <text evidence="1">Belongs to the HisA/HisF family.</text>
</comment>
<gene>
    <name evidence="1" type="primary">hisA</name>
    <name type="ordered locus">Bind_0246</name>
</gene>
<dbReference type="EC" id="5.3.1.16" evidence="1"/>
<dbReference type="EMBL" id="CP001016">
    <property type="protein sequence ID" value="ACB93902.1"/>
    <property type="molecule type" value="Genomic_DNA"/>
</dbReference>
<dbReference type="SMR" id="B2ICL3"/>
<dbReference type="STRING" id="395963.Bind_0246"/>
<dbReference type="KEGG" id="bid:Bind_0246"/>
<dbReference type="eggNOG" id="COG0106">
    <property type="taxonomic scope" value="Bacteria"/>
</dbReference>
<dbReference type="HOGENOM" id="CLU_048577_1_1_5"/>
<dbReference type="UniPathway" id="UPA00031">
    <property type="reaction ID" value="UER00009"/>
</dbReference>
<dbReference type="Proteomes" id="UP000001695">
    <property type="component" value="Chromosome"/>
</dbReference>
<dbReference type="GO" id="GO:0005737">
    <property type="term" value="C:cytoplasm"/>
    <property type="evidence" value="ECO:0007669"/>
    <property type="project" value="UniProtKB-SubCell"/>
</dbReference>
<dbReference type="GO" id="GO:0003949">
    <property type="term" value="F:1-(5-phosphoribosyl)-5-[(5-phosphoribosylamino)methylideneamino]imidazole-4-carboxamide isomerase activity"/>
    <property type="evidence" value="ECO:0007669"/>
    <property type="project" value="UniProtKB-UniRule"/>
</dbReference>
<dbReference type="GO" id="GO:0000105">
    <property type="term" value="P:L-histidine biosynthetic process"/>
    <property type="evidence" value="ECO:0007669"/>
    <property type="project" value="UniProtKB-UniRule"/>
</dbReference>
<dbReference type="GO" id="GO:0000162">
    <property type="term" value="P:L-tryptophan biosynthetic process"/>
    <property type="evidence" value="ECO:0007669"/>
    <property type="project" value="TreeGrafter"/>
</dbReference>
<dbReference type="CDD" id="cd04732">
    <property type="entry name" value="HisA"/>
    <property type="match status" value="1"/>
</dbReference>
<dbReference type="FunFam" id="3.20.20.70:FF:000009">
    <property type="entry name" value="1-(5-phosphoribosyl)-5-[(5-phosphoribosylamino)methylideneamino] imidazole-4-carboxamide isomerase"/>
    <property type="match status" value="1"/>
</dbReference>
<dbReference type="Gene3D" id="3.20.20.70">
    <property type="entry name" value="Aldolase class I"/>
    <property type="match status" value="1"/>
</dbReference>
<dbReference type="HAMAP" id="MF_01014">
    <property type="entry name" value="HisA"/>
    <property type="match status" value="1"/>
</dbReference>
<dbReference type="InterPro" id="IPR013785">
    <property type="entry name" value="Aldolase_TIM"/>
</dbReference>
<dbReference type="InterPro" id="IPR006062">
    <property type="entry name" value="His_biosynth"/>
</dbReference>
<dbReference type="InterPro" id="IPR006063">
    <property type="entry name" value="HisA_bact_arch"/>
</dbReference>
<dbReference type="InterPro" id="IPR044524">
    <property type="entry name" value="Isoase_HisA-like"/>
</dbReference>
<dbReference type="InterPro" id="IPR023016">
    <property type="entry name" value="Isoase_HisA-like_bact"/>
</dbReference>
<dbReference type="InterPro" id="IPR011060">
    <property type="entry name" value="RibuloseP-bd_barrel"/>
</dbReference>
<dbReference type="NCBIfam" id="TIGR00007">
    <property type="entry name" value="1-(5-phosphoribosyl)-5-[(5-phosphoribosylamino)methylideneamino]imidazole-4-carboxamide isomerase"/>
    <property type="match status" value="1"/>
</dbReference>
<dbReference type="PANTHER" id="PTHR43090">
    <property type="entry name" value="1-(5-PHOSPHORIBOSYL)-5-[(5-PHOSPHORIBOSYLAMINO)METHYLIDENEAMINO] IMIDAZOLE-4-CARBOXAMIDE ISOMERASE"/>
    <property type="match status" value="1"/>
</dbReference>
<dbReference type="PANTHER" id="PTHR43090:SF2">
    <property type="entry name" value="1-(5-PHOSPHORIBOSYL)-5-[(5-PHOSPHORIBOSYLAMINO)METHYLIDENEAMINO] IMIDAZOLE-4-CARBOXAMIDE ISOMERASE"/>
    <property type="match status" value="1"/>
</dbReference>
<dbReference type="Pfam" id="PF00977">
    <property type="entry name" value="His_biosynth"/>
    <property type="match status" value="1"/>
</dbReference>
<dbReference type="SUPFAM" id="SSF51366">
    <property type="entry name" value="Ribulose-phoshate binding barrel"/>
    <property type="match status" value="1"/>
</dbReference>
<name>HIS4_BEII9</name>
<reference key="1">
    <citation type="journal article" date="2010" name="J. Bacteriol.">
        <title>Complete genome sequence of Beijerinckia indica subsp. indica.</title>
        <authorList>
            <person name="Tamas I."/>
            <person name="Dedysh S.N."/>
            <person name="Liesack W."/>
            <person name="Stott M.B."/>
            <person name="Alam M."/>
            <person name="Murrell J.C."/>
            <person name="Dunfield P.F."/>
        </authorList>
    </citation>
    <scope>NUCLEOTIDE SEQUENCE [LARGE SCALE GENOMIC DNA]</scope>
    <source>
        <strain>ATCC 9039 / DSM 1715 / NCIMB 8712</strain>
    </source>
</reference>
<sequence length="242" mass="25020">MILYPAIDLKEGHCVRLLQGDMQKATIFNDDPAAQAAAFEAQGFTALHVVDLDGAFAGKPMNAAAVDAILARVKMSVQLGGGIRDEATIEAWLGKGIARVIIGTAAVRDPDLVRRAAARFPGKIAVGIDAKDGFVAVEGWAKTAQLSAVELGKKFEDAGVAALIYTDIARDGGLTGLNIDATLALAKAVHIPVIASGGLASLADIERLTAPDCAILAGAISGRALYDGRIDPAKALALLRKD</sequence>
<evidence type="ECO:0000255" key="1">
    <source>
        <dbReference type="HAMAP-Rule" id="MF_01014"/>
    </source>
</evidence>
<keyword id="KW-0028">Amino-acid biosynthesis</keyword>
<keyword id="KW-0963">Cytoplasm</keyword>
<keyword id="KW-0368">Histidine biosynthesis</keyword>
<keyword id="KW-0413">Isomerase</keyword>
<keyword id="KW-1185">Reference proteome</keyword>
<protein>
    <recommendedName>
        <fullName evidence="1">1-(5-phosphoribosyl)-5-[(5-phosphoribosylamino)methylideneamino] imidazole-4-carboxamide isomerase</fullName>
        <ecNumber evidence="1">5.3.1.16</ecNumber>
    </recommendedName>
    <alternativeName>
        <fullName evidence="1">Phosphoribosylformimino-5-aminoimidazole carboxamide ribotide isomerase</fullName>
    </alternativeName>
</protein>
<proteinExistence type="inferred from homology"/>